<dbReference type="EMBL" id="AP006627">
    <property type="protein sequence ID" value="BAD62709.1"/>
    <property type="molecule type" value="Genomic_DNA"/>
</dbReference>
<dbReference type="RefSeq" id="WP_011245030.1">
    <property type="nucleotide sequence ID" value="NC_006582.1"/>
</dbReference>
<dbReference type="SMR" id="Q5WLP6"/>
<dbReference type="STRING" id="66692.ABC0166"/>
<dbReference type="GeneID" id="86924202"/>
<dbReference type="KEGG" id="bcl:ABC0166"/>
<dbReference type="eggNOG" id="COG0256">
    <property type="taxonomic scope" value="Bacteria"/>
</dbReference>
<dbReference type="HOGENOM" id="CLU_098841_0_1_9"/>
<dbReference type="OrthoDB" id="9810939at2"/>
<dbReference type="Proteomes" id="UP000001168">
    <property type="component" value="Chromosome"/>
</dbReference>
<dbReference type="GO" id="GO:0022625">
    <property type="term" value="C:cytosolic large ribosomal subunit"/>
    <property type="evidence" value="ECO:0007669"/>
    <property type="project" value="TreeGrafter"/>
</dbReference>
<dbReference type="GO" id="GO:0008097">
    <property type="term" value="F:5S rRNA binding"/>
    <property type="evidence" value="ECO:0007669"/>
    <property type="project" value="TreeGrafter"/>
</dbReference>
<dbReference type="GO" id="GO:0003735">
    <property type="term" value="F:structural constituent of ribosome"/>
    <property type="evidence" value="ECO:0007669"/>
    <property type="project" value="InterPro"/>
</dbReference>
<dbReference type="GO" id="GO:0006412">
    <property type="term" value="P:translation"/>
    <property type="evidence" value="ECO:0007669"/>
    <property type="project" value="UniProtKB-UniRule"/>
</dbReference>
<dbReference type="CDD" id="cd00432">
    <property type="entry name" value="Ribosomal_L18_L5e"/>
    <property type="match status" value="1"/>
</dbReference>
<dbReference type="FunFam" id="3.30.420.100:FF:000001">
    <property type="entry name" value="50S ribosomal protein L18"/>
    <property type="match status" value="1"/>
</dbReference>
<dbReference type="Gene3D" id="3.30.420.100">
    <property type="match status" value="1"/>
</dbReference>
<dbReference type="HAMAP" id="MF_01337_B">
    <property type="entry name" value="Ribosomal_uL18_B"/>
    <property type="match status" value="1"/>
</dbReference>
<dbReference type="InterPro" id="IPR004389">
    <property type="entry name" value="Ribosomal_uL18_bac-type"/>
</dbReference>
<dbReference type="InterPro" id="IPR005484">
    <property type="entry name" value="Ribosomal_uL18_bac/euk"/>
</dbReference>
<dbReference type="NCBIfam" id="TIGR00060">
    <property type="entry name" value="L18_bact"/>
    <property type="match status" value="1"/>
</dbReference>
<dbReference type="PANTHER" id="PTHR12899">
    <property type="entry name" value="39S RIBOSOMAL PROTEIN L18, MITOCHONDRIAL"/>
    <property type="match status" value="1"/>
</dbReference>
<dbReference type="PANTHER" id="PTHR12899:SF3">
    <property type="entry name" value="LARGE RIBOSOMAL SUBUNIT PROTEIN UL18M"/>
    <property type="match status" value="1"/>
</dbReference>
<dbReference type="Pfam" id="PF00861">
    <property type="entry name" value="Ribosomal_L18p"/>
    <property type="match status" value="1"/>
</dbReference>
<dbReference type="SUPFAM" id="SSF53137">
    <property type="entry name" value="Translational machinery components"/>
    <property type="match status" value="1"/>
</dbReference>
<feature type="chain" id="PRO_0000131214" description="Large ribosomal subunit protein uL18">
    <location>
        <begin position="1"/>
        <end position="120"/>
    </location>
</feature>
<feature type="region of interest" description="Disordered" evidence="2">
    <location>
        <begin position="1"/>
        <end position="29"/>
    </location>
</feature>
<feature type="compositionally biased region" description="Basic residues" evidence="2">
    <location>
        <begin position="9"/>
        <end position="20"/>
    </location>
</feature>
<proteinExistence type="inferred from homology"/>
<gene>
    <name evidence="1" type="primary">rplR</name>
    <name type="ordered locus">ABC0166</name>
</gene>
<accession>Q5WLP6</accession>
<reference key="1">
    <citation type="submission" date="2003-10" db="EMBL/GenBank/DDBJ databases">
        <title>The complete genome sequence of the alkaliphilic Bacillus clausii KSM-K16.</title>
        <authorList>
            <person name="Takaki Y."/>
            <person name="Kageyama Y."/>
            <person name="Shimamura S."/>
            <person name="Suzuki H."/>
            <person name="Nishi S."/>
            <person name="Hatada Y."/>
            <person name="Kawai S."/>
            <person name="Ito S."/>
            <person name="Horikoshi K."/>
        </authorList>
    </citation>
    <scope>NUCLEOTIDE SEQUENCE [LARGE SCALE GENOMIC DNA]</scope>
    <source>
        <strain>KSM-K16</strain>
    </source>
</reference>
<evidence type="ECO:0000255" key="1">
    <source>
        <dbReference type="HAMAP-Rule" id="MF_01337"/>
    </source>
</evidence>
<evidence type="ECO:0000256" key="2">
    <source>
        <dbReference type="SAM" id="MobiDB-lite"/>
    </source>
</evidence>
<evidence type="ECO:0000305" key="3"/>
<keyword id="KW-1185">Reference proteome</keyword>
<keyword id="KW-0687">Ribonucleoprotein</keyword>
<keyword id="KW-0689">Ribosomal protein</keyword>
<keyword id="KW-0694">RNA-binding</keyword>
<keyword id="KW-0699">rRNA-binding</keyword>
<name>RL18_SHOC1</name>
<organism>
    <name type="scientific">Shouchella clausii (strain KSM-K16)</name>
    <name type="common">Alkalihalobacillus clausii</name>
    <dbReference type="NCBI Taxonomy" id="66692"/>
    <lineage>
        <taxon>Bacteria</taxon>
        <taxon>Bacillati</taxon>
        <taxon>Bacillota</taxon>
        <taxon>Bacilli</taxon>
        <taxon>Bacillales</taxon>
        <taxon>Bacillaceae</taxon>
        <taxon>Shouchella</taxon>
    </lineage>
</organism>
<sequence length="120" mass="13140">MITKPNKNAGRKKRHAHVRRTLSGTPQRPRLNVFRSSKHIYAQLIDDVNGVTLAQASTLDKELGLENGGNKEAARKVGELVGKRAVDAGFESVVFDRGGYLYHGRIAELADGAREAGLKF</sequence>
<comment type="function">
    <text evidence="1">This is one of the proteins that bind and probably mediate the attachment of the 5S RNA into the large ribosomal subunit, where it forms part of the central protuberance.</text>
</comment>
<comment type="subunit">
    <text evidence="1">Part of the 50S ribosomal subunit; part of the 5S rRNA/L5/L18/L25 subcomplex. Contacts the 5S and 23S rRNAs.</text>
</comment>
<comment type="similarity">
    <text evidence="1">Belongs to the universal ribosomal protein uL18 family.</text>
</comment>
<protein>
    <recommendedName>
        <fullName evidence="1">Large ribosomal subunit protein uL18</fullName>
    </recommendedName>
    <alternativeName>
        <fullName evidence="3">50S ribosomal protein L18</fullName>
    </alternativeName>
</protein>